<comment type="function">
    <text evidence="1">Binds to the 23S rRNA.</text>
</comment>
<comment type="subunit">
    <text evidence="1">Part of the 50S ribosomal subunit.</text>
</comment>
<comment type="similarity">
    <text evidence="1">Belongs to the universal ribosomal protein uL15 family.</text>
</comment>
<name>RL15_MYCM1</name>
<reference key="1">
    <citation type="journal article" date="2004" name="Genome Res.">
        <title>The complete genome and proteome of Mycoplasma mobile.</title>
        <authorList>
            <person name="Jaffe J.D."/>
            <person name="Stange-Thomann N."/>
            <person name="Smith C."/>
            <person name="DeCaprio D."/>
            <person name="Fisher S."/>
            <person name="Butler J."/>
            <person name="Calvo S."/>
            <person name="Elkins T."/>
            <person name="FitzGerald M.G."/>
            <person name="Hafez N."/>
            <person name="Kodira C.D."/>
            <person name="Major J."/>
            <person name="Wang S."/>
            <person name="Wilkinson J."/>
            <person name="Nicol R."/>
            <person name="Nusbaum C."/>
            <person name="Birren B."/>
            <person name="Berg H.C."/>
            <person name="Church G.M."/>
        </authorList>
    </citation>
    <scope>NUCLEOTIDE SEQUENCE [LARGE SCALE GENOMIC DNA]</scope>
    <source>
        <strain>ATCC 43663 / NCTC 11711 / 163 K</strain>
    </source>
</reference>
<proteinExistence type="inferred from homology"/>
<evidence type="ECO:0000255" key="1">
    <source>
        <dbReference type="HAMAP-Rule" id="MF_01341"/>
    </source>
</evidence>
<evidence type="ECO:0000256" key="2">
    <source>
        <dbReference type="SAM" id="MobiDB-lite"/>
    </source>
</evidence>
<evidence type="ECO:0000305" key="3"/>
<sequence>MNLHELKYNEGARKEKHRVGRGHAAGKGKQAGKGQSGQLKRTGSKPGFEGGQNPWYRRVPKRGFNNVNHIEYQVISIETLDAAFPDKAEINPEVLHEKRIARNKNLPIKLLANGATKKKFTIKLNAASKKAIELIEKAGGKVEVI</sequence>
<keyword id="KW-1185">Reference proteome</keyword>
<keyword id="KW-0687">Ribonucleoprotein</keyword>
<keyword id="KW-0689">Ribosomal protein</keyword>
<keyword id="KW-0694">RNA-binding</keyword>
<keyword id="KW-0699">rRNA-binding</keyword>
<feature type="chain" id="PRO_0000104762" description="Large ribosomal subunit protein uL15">
    <location>
        <begin position="1"/>
        <end position="145"/>
    </location>
</feature>
<feature type="region of interest" description="Disordered" evidence="2">
    <location>
        <begin position="1"/>
        <end position="56"/>
    </location>
</feature>
<feature type="compositionally biased region" description="Basic and acidic residues" evidence="2">
    <location>
        <begin position="1"/>
        <end position="13"/>
    </location>
</feature>
<feature type="compositionally biased region" description="Basic residues" evidence="2">
    <location>
        <begin position="14"/>
        <end position="26"/>
    </location>
</feature>
<gene>
    <name evidence="1" type="primary">rplO</name>
    <name type="ordered locus">MMOB2530</name>
</gene>
<protein>
    <recommendedName>
        <fullName evidence="1">Large ribosomal subunit protein uL15</fullName>
    </recommendedName>
    <alternativeName>
        <fullName evidence="3">50S ribosomal protein L15</fullName>
    </alternativeName>
</protein>
<dbReference type="EMBL" id="AE017308">
    <property type="protein sequence ID" value="AAT27739.1"/>
    <property type="molecule type" value="Genomic_DNA"/>
</dbReference>
<dbReference type="RefSeq" id="WP_011264773.1">
    <property type="nucleotide sequence ID" value="NC_006908.1"/>
</dbReference>
<dbReference type="SMR" id="Q6KI37"/>
<dbReference type="STRING" id="267748.MMOB2530"/>
<dbReference type="KEGG" id="mmo:MMOB2530"/>
<dbReference type="eggNOG" id="COG0200">
    <property type="taxonomic scope" value="Bacteria"/>
</dbReference>
<dbReference type="HOGENOM" id="CLU_055188_4_1_14"/>
<dbReference type="OrthoDB" id="9810293at2"/>
<dbReference type="Proteomes" id="UP000009072">
    <property type="component" value="Chromosome"/>
</dbReference>
<dbReference type="GO" id="GO:0022625">
    <property type="term" value="C:cytosolic large ribosomal subunit"/>
    <property type="evidence" value="ECO:0007669"/>
    <property type="project" value="TreeGrafter"/>
</dbReference>
<dbReference type="GO" id="GO:0019843">
    <property type="term" value="F:rRNA binding"/>
    <property type="evidence" value="ECO:0007669"/>
    <property type="project" value="UniProtKB-UniRule"/>
</dbReference>
<dbReference type="GO" id="GO:0003735">
    <property type="term" value="F:structural constituent of ribosome"/>
    <property type="evidence" value="ECO:0007669"/>
    <property type="project" value="InterPro"/>
</dbReference>
<dbReference type="GO" id="GO:0006412">
    <property type="term" value="P:translation"/>
    <property type="evidence" value="ECO:0007669"/>
    <property type="project" value="UniProtKB-UniRule"/>
</dbReference>
<dbReference type="Gene3D" id="3.100.10.10">
    <property type="match status" value="1"/>
</dbReference>
<dbReference type="HAMAP" id="MF_01341">
    <property type="entry name" value="Ribosomal_uL15"/>
    <property type="match status" value="1"/>
</dbReference>
<dbReference type="InterPro" id="IPR030878">
    <property type="entry name" value="Ribosomal_uL15"/>
</dbReference>
<dbReference type="InterPro" id="IPR021131">
    <property type="entry name" value="Ribosomal_uL15/eL18"/>
</dbReference>
<dbReference type="InterPro" id="IPR036227">
    <property type="entry name" value="Ribosomal_uL15/eL18_sf"/>
</dbReference>
<dbReference type="InterPro" id="IPR005749">
    <property type="entry name" value="Ribosomal_uL15_bac-type"/>
</dbReference>
<dbReference type="NCBIfam" id="TIGR01071">
    <property type="entry name" value="rplO_bact"/>
    <property type="match status" value="1"/>
</dbReference>
<dbReference type="PANTHER" id="PTHR12934">
    <property type="entry name" value="50S RIBOSOMAL PROTEIN L15"/>
    <property type="match status" value="1"/>
</dbReference>
<dbReference type="PANTHER" id="PTHR12934:SF11">
    <property type="entry name" value="LARGE RIBOSOMAL SUBUNIT PROTEIN UL15M"/>
    <property type="match status" value="1"/>
</dbReference>
<dbReference type="Pfam" id="PF00828">
    <property type="entry name" value="Ribosomal_L27A"/>
    <property type="match status" value="1"/>
</dbReference>
<dbReference type="SUPFAM" id="SSF52080">
    <property type="entry name" value="Ribosomal proteins L15p and L18e"/>
    <property type="match status" value="1"/>
</dbReference>
<accession>Q6KI37</accession>
<organism>
    <name type="scientific">Mycoplasma mobile (strain ATCC 43663 / 163K / NCTC 11711)</name>
    <name type="common">Mesomycoplasma mobile</name>
    <dbReference type="NCBI Taxonomy" id="267748"/>
    <lineage>
        <taxon>Bacteria</taxon>
        <taxon>Bacillati</taxon>
        <taxon>Mycoplasmatota</taxon>
        <taxon>Mycoplasmoidales</taxon>
        <taxon>Metamycoplasmataceae</taxon>
        <taxon>Mesomycoplasma</taxon>
    </lineage>
</organism>